<feature type="chain" id="PRO_0000095887" description="Translation initiation factor IF-1 1">
    <location>
        <begin position="1"/>
        <end position="75"/>
    </location>
</feature>
<feature type="domain" description="S1-like" evidence="1">
    <location>
        <begin position="1"/>
        <end position="74"/>
    </location>
</feature>
<sequence length="75" mass="8736">MARSDMIEVDGVIVEPRSNGFFTVRLDLENQPEVIAHLGGKLRRHYIRVVPGDRVTVELSPYDLTRGRIVYRYRH</sequence>
<evidence type="ECO:0000255" key="1">
    <source>
        <dbReference type="HAMAP-Rule" id="MF_00075"/>
    </source>
</evidence>
<keyword id="KW-0963">Cytoplasm</keyword>
<keyword id="KW-0396">Initiation factor</keyword>
<keyword id="KW-0648">Protein biosynthesis</keyword>
<keyword id="KW-1185">Reference proteome</keyword>
<keyword id="KW-0694">RNA-binding</keyword>
<keyword id="KW-0699">rRNA-binding</keyword>
<protein>
    <recommendedName>
        <fullName evidence="1">Translation initiation factor IF-1 1</fullName>
    </recommendedName>
</protein>
<name>IF11_SYMTH</name>
<dbReference type="EMBL" id="AP006840">
    <property type="protein sequence ID" value="BAD39990.1"/>
    <property type="molecule type" value="Genomic_DNA"/>
</dbReference>
<dbReference type="RefSeq" id="WP_011195137.1">
    <property type="nucleotide sequence ID" value="NC_006177.1"/>
</dbReference>
<dbReference type="SMR" id="Q67QQ3"/>
<dbReference type="STRING" id="292459.STH1005"/>
<dbReference type="KEGG" id="sth:STH1005"/>
<dbReference type="eggNOG" id="COG0361">
    <property type="taxonomic scope" value="Bacteria"/>
</dbReference>
<dbReference type="HOGENOM" id="CLU_151267_1_0_9"/>
<dbReference type="OrthoDB" id="9803250at2"/>
<dbReference type="Proteomes" id="UP000000417">
    <property type="component" value="Chromosome"/>
</dbReference>
<dbReference type="GO" id="GO:0005829">
    <property type="term" value="C:cytosol"/>
    <property type="evidence" value="ECO:0007669"/>
    <property type="project" value="TreeGrafter"/>
</dbReference>
<dbReference type="GO" id="GO:0043022">
    <property type="term" value="F:ribosome binding"/>
    <property type="evidence" value="ECO:0007669"/>
    <property type="project" value="UniProtKB-UniRule"/>
</dbReference>
<dbReference type="GO" id="GO:0019843">
    <property type="term" value="F:rRNA binding"/>
    <property type="evidence" value="ECO:0007669"/>
    <property type="project" value="UniProtKB-UniRule"/>
</dbReference>
<dbReference type="GO" id="GO:0003743">
    <property type="term" value="F:translation initiation factor activity"/>
    <property type="evidence" value="ECO:0007669"/>
    <property type="project" value="UniProtKB-UniRule"/>
</dbReference>
<dbReference type="CDD" id="cd04451">
    <property type="entry name" value="S1_IF1"/>
    <property type="match status" value="1"/>
</dbReference>
<dbReference type="FunFam" id="2.40.50.140:FF:000002">
    <property type="entry name" value="Translation initiation factor IF-1"/>
    <property type="match status" value="1"/>
</dbReference>
<dbReference type="Gene3D" id="2.40.50.140">
    <property type="entry name" value="Nucleic acid-binding proteins"/>
    <property type="match status" value="1"/>
</dbReference>
<dbReference type="HAMAP" id="MF_00075">
    <property type="entry name" value="IF_1"/>
    <property type="match status" value="1"/>
</dbReference>
<dbReference type="InterPro" id="IPR012340">
    <property type="entry name" value="NA-bd_OB-fold"/>
</dbReference>
<dbReference type="InterPro" id="IPR006196">
    <property type="entry name" value="RNA-binding_domain_S1_IF1"/>
</dbReference>
<dbReference type="InterPro" id="IPR004368">
    <property type="entry name" value="TIF_IF1"/>
</dbReference>
<dbReference type="NCBIfam" id="TIGR00008">
    <property type="entry name" value="infA"/>
    <property type="match status" value="1"/>
</dbReference>
<dbReference type="PANTHER" id="PTHR33370">
    <property type="entry name" value="TRANSLATION INITIATION FACTOR IF-1, CHLOROPLASTIC"/>
    <property type="match status" value="1"/>
</dbReference>
<dbReference type="PANTHER" id="PTHR33370:SF1">
    <property type="entry name" value="TRANSLATION INITIATION FACTOR IF-1, CHLOROPLASTIC"/>
    <property type="match status" value="1"/>
</dbReference>
<dbReference type="Pfam" id="PF01176">
    <property type="entry name" value="eIF-1a"/>
    <property type="match status" value="1"/>
</dbReference>
<dbReference type="SUPFAM" id="SSF50249">
    <property type="entry name" value="Nucleic acid-binding proteins"/>
    <property type="match status" value="1"/>
</dbReference>
<dbReference type="PROSITE" id="PS50832">
    <property type="entry name" value="S1_IF1_TYPE"/>
    <property type="match status" value="1"/>
</dbReference>
<accession>Q67QQ3</accession>
<comment type="function">
    <text evidence="1">One of the essential components for the initiation of protein synthesis. Stabilizes the binding of IF-2 and IF-3 on the 30S subunit to which N-formylmethionyl-tRNA(fMet) subsequently binds. Helps modulate mRNA selection, yielding the 30S pre-initiation complex (PIC). Upon addition of the 50S ribosomal subunit IF-1, IF-2 and IF-3 are released leaving the mature 70S translation initiation complex.</text>
</comment>
<comment type="subunit">
    <text evidence="1">Component of the 30S ribosomal translation pre-initiation complex which assembles on the 30S ribosome in the order IF-2 and IF-3, IF-1 and N-formylmethionyl-tRNA(fMet); mRNA recruitment can occur at any time during PIC assembly.</text>
</comment>
<comment type="subcellular location">
    <subcellularLocation>
        <location evidence="1">Cytoplasm</location>
    </subcellularLocation>
</comment>
<comment type="similarity">
    <text evidence="1">Belongs to the IF-1 family.</text>
</comment>
<gene>
    <name evidence="1" type="primary">infA1</name>
    <name type="ordered locus">STH1005</name>
</gene>
<proteinExistence type="inferred from homology"/>
<reference key="1">
    <citation type="journal article" date="2004" name="Nucleic Acids Res.">
        <title>Genome sequence of Symbiobacterium thermophilum, an uncultivable bacterium that depends on microbial commensalism.</title>
        <authorList>
            <person name="Ueda K."/>
            <person name="Yamashita A."/>
            <person name="Ishikawa J."/>
            <person name="Shimada M."/>
            <person name="Watsuji T."/>
            <person name="Morimura K."/>
            <person name="Ikeda H."/>
            <person name="Hattori M."/>
            <person name="Beppu T."/>
        </authorList>
    </citation>
    <scope>NUCLEOTIDE SEQUENCE [LARGE SCALE GENOMIC DNA]</scope>
    <source>
        <strain>DSM 24528 / JCM 14929 / IAM 14863 / T</strain>
    </source>
</reference>
<organism>
    <name type="scientific">Symbiobacterium thermophilum (strain DSM 24528 / JCM 14929 / IAM 14863 / T)</name>
    <dbReference type="NCBI Taxonomy" id="292459"/>
    <lineage>
        <taxon>Bacteria</taxon>
        <taxon>Bacillati</taxon>
        <taxon>Bacillota</taxon>
        <taxon>Clostridia</taxon>
        <taxon>Eubacteriales</taxon>
        <taxon>Symbiobacteriaceae</taxon>
        <taxon>Symbiobacterium</taxon>
    </lineage>
</organism>